<accession>Q1LSK9</accession>
<feature type="chain" id="PRO_1000000072" description="Ribosome-binding factor A">
    <location>
        <begin position="1"/>
        <end position="134"/>
    </location>
</feature>
<protein>
    <recommendedName>
        <fullName evidence="1">Ribosome-binding factor A</fullName>
    </recommendedName>
</protein>
<proteinExistence type="inferred from homology"/>
<evidence type="ECO:0000255" key="1">
    <source>
        <dbReference type="HAMAP-Rule" id="MF_00003"/>
    </source>
</evidence>
<sequence>MANVYSRKKRIAHEIQKKINISLQHNIRDPRLRKTTISWVSVSHDLGSATVFVIFNGIQNDNQTSEEIKKRIKTLQAASGFIRYLLGKTMHLRIVPKLTFVYDQSLSHGIYIHELVNKIIREDHKSLIKNGIVN</sequence>
<reference key="1">
    <citation type="journal article" date="2006" name="PLoS Biol.">
        <title>Metabolic complementarity and genomics of the dual bacterial symbiosis of sharpshooters.</title>
        <authorList>
            <person name="Wu D."/>
            <person name="Daugherty S.C."/>
            <person name="Van Aken S.E."/>
            <person name="Pai G.H."/>
            <person name="Watkins K.L."/>
            <person name="Khouri H."/>
            <person name="Tallon L.J."/>
            <person name="Zaborsky J.M."/>
            <person name="Dunbar H.E."/>
            <person name="Tran P.L."/>
            <person name="Moran N.A."/>
            <person name="Eisen J.A."/>
        </authorList>
    </citation>
    <scope>NUCLEOTIDE SEQUENCE [LARGE SCALE GENOMIC DNA]</scope>
</reference>
<dbReference type="EMBL" id="CP000238">
    <property type="protein sequence ID" value="ABF14202.1"/>
    <property type="molecule type" value="Genomic_DNA"/>
</dbReference>
<dbReference type="RefSeq" id="WP_011520788.1">
    <property type="nucleotide sequence ID" value="NC_007984.1"/>
</dbReference>
<dbReference type="SMR" id="Q1LSK9"/>
<dbReference type="STRING" id="374463.BCI_0630"/>
<dbReference type="KEGG" id="bci:BCI_0630"/>
<dbReference type="HOGENOM" id="CLU_089475_5_0_6"/>
<dbReference type="OrthoDB" id="307788at2"/>
<dbReference type="Proteomes" id="UP000002427">
    <property type="component" value="Chromosome"/>
</dbReference>
<dbReference type="GO" id="GO:0005829">
    <property type="term" value="C:cytosol"/>
    <property type="evidence" value="ECO:0007669"/>
    <property type="project" value="TreeGrafter"/>
</dbReference>
<dbReference type="GO" id="GO:0043024">
    <property type="term" value="F:ribosomal small subunit binding"/>
    <property type="evidence" value="ECO:0007669"/>
    <property type="project" value="TreeGrafter"/>
</dbReference>
<dbReference type="GO" id="GO:0030490">
    <property type="term" value="P:maturation of SSU-rRNA"/>
    <property type="evidence" value="ECO:0007669"/>
    <property type="project" value="UniProtKB-UniRule"/>
</dbReference>
<dbReference type="Gene3D" id="3.30.300.20">
    <property type="match status" value="1"/>
</dbReference>
<dbReference type="HAMAP" id="MF_00003">
    <property type="entry name" value="RbfA"/>
    <property type="match status" value="1"/>
</dbReference>
<dbReference type="InterPro" id="IPR015946">
    <property type="entry name" value="KH_dom-like_a/b"/>
</dbReference>
<dbReference type="InterPro" id="IPR000238">
    <property type="entry name" value="RbfA"/>
</dbReference>
<dbReference type="InterPro" id="IPR023799">
    <property type="entry name" value="RbfA_dom_sf"/>
</dbReference>
<dbReference type="InterPro" id="IPR020053">
    <property type="entry name" value="Ribosome-bd_factorA_CS"/>
</dbReference>
<dbReference type="NCBIfam" id="TIGR00082">
    <property type="entry name" value="rbfA"/>
    <property type="match status" value="1"/>
</dbReference>
<dbReference type="PANTHER" id="PTHR33515">
    <property type="entry name" value="RIBOSOME-BINDING FACTOR A, CHLOROPLASTIC-RELATED"/>
    <property type="match status" value="1"/>
</dbReference>
<dbReference type="PANTHER" id="PTHR33515:SF1">
    <property type="entry name" value="RIBOSOME-BINDING FACTOR A, CHLOROPLASTIC-RELATED"/>
    <property type="match status" value="1"/>
</dbReference>
<dbReference type="Pfam" id="PF02033">
    <property type="entry name" value="RBFA"/>
    <property type="match status" value="1"/>
</dbReference>
<dbReference type="SUPFAM" id="SSF89919">
    <property type="entry name" value="Ribosome-binding factor A, RbfA"/>
    <property type="match status" value="1"/>
</dbReference>
<dbReference type="PROSITE" id="PS01319">
    <property type="entry name" value="RBFA"/>
    <property type="match status" value="1"/>
</dbReference>
<organism>
    <name type="scientific">Baumannia cicadellinicola subsp. Homalodisca coagulata</name>
    <dbReference type="NCBI Taxonomy" id="374463"/>
    <lineage>
        <taxon>Bacteria</taxon>
        <taxon>Pseudomonadati</taxon>
        <taxon>Pseudomonadota</taxon>
        <taxon>Gammaproteobacteria</taxon>
        <taxon>Candidatus Palibaumannia</taxon>
    </lineage>
</organism>
<keyword id="KW-0963">Cytoplasm</keyword>
<keyword id="KW-1185">Reference proteome</keyword>
<keyword id="KW-0690">Ribosome biogenesis</keyword>
<gene>
    <name evidence="1" type="primary">rbfA</name>
    <name type="ordered locus">BCI_0630</name>
</gene>
<comment type="function">
    <text evidence="1">One of several proteins that assist in the late maturation steps of the functional core of the 30S ribosomal subunit. Associates with free 30S ribosomal subunits (but not with 30S subunits that are part of 70S ribosomes or polysomes). Required for efficient processing of 16S rRNA. May interact with the 5'-terminal helix region of 16S rRNA.</text>
</comment>
<comment type="subunit">
    <text evidence="1">Monomer. Binds 30S ribosomal subunits, but not 50S ribosomal subunits or 70S ribosomes.</text>
</comment>
<comment type="subcellular location">
    <subcellularLocation>
        <location evidence="1">Cytoplasm</location>
    </subcellularLocation>
</comment>
<comment type="similarity">
    <text evidence="1">Belongs to the RbfA family.</text>
</comment>
<name>RBFA_BAUCH</name>